<proteinExistence type="inferred from homology"/>
<feature type="chain" id="PRO_0000370589" description="tRNA (guanine-N(7)-)-methyltransferase">
    <location>
        <begin position="1"/>
        <end position="346"/>
    </location>
</feature>
<feature type="region of interest" description="Disordered" evidence="2">
    <location>
        <begin position="149"/>
        <end position="191"/>
    </location>
</feature>
<feature type="compositionally biased region" description="Low complexity" evidence="2">
    <location>
        <begin position="171"/>
        <end position="182"/>
    </location>
</feature>
<feature type="active site" evidence="1">
    <location>
        <position position="227"/>
    </location>
</feature>
<feature type="binding site" evidence="1">
    <location>
        <position position="101"/>
    </location>
    <ligand>
        <name>S-adenosyl-L-methionine</name>
        <dbReference type="ChEBI" id="CHEBI:59789"/>
    </ligand>
</feature>
<feature type="binding site" evidence="1">
    <location>
        <begin position="124"/>
        <end position="125"/>
    </location>
    <ligand>
        <name>S-adenosyl-L-methionine</name>
        <dbReference type="ChEBI" id="CHEBI:59789"/>
    </ligand>
</feature>
<feature type="binding site" evidence="1">
    <location>
        <begin position="204"/>
        <end position="205"/>
    </location>
    <ligand>
        <name>S-adenosyl-L-methionine</name>
        <dbReference type="ChEBI" id="CHEBI:59789"/>
    </ligand>
</feature>
<feature type="binding site" evidence="1">
    <location>
        <position position="224"/>
    </location>
    <ligand>
        <name>S-adenosyl-L-methionine</name>
        <dbReference type="ChEBI" id="CHEBI:59789"/>
    </ligand>
</feature>
<feature type="binding site" evidence="1">
    <location>
        <begin position="318"/>
        <end position="320"/>
    </location>
    <ligand>
        <name>S-adenosyl-L-methionine</name>
        <dbReference type="ChEBI" id="CHEBI:59789"/>
    </ligand>
</feature>
<organism>
    <name type="scientific">Aspergillus terreus (strain NIH 2624 / FGSC A1156)</name>
    <dbReference type="NCBI Taxonomy" id="341663"/>
    <lineage>
        <taxon>Eukaryota</taxon>
        <taxon>Fungi</taxon>
        <taxon>Dikarya</taxon>
        <taxon>Ascomycota</taxon>
        <taxon>Pezizomycotina</taxon>
        <taxon>Eurotiomycetes</taxon>
        <taxon>Eurotiomycetidae</taxon>
        <taxon>Eurotiales</taxon>
        <taxon>Aspergillaceae</taxon>
        <taxon>Aspergillus</taxon>
        <taxon>Aspergillus subgen. Circumdati</taxon>
    </lineage>
</organism>
<dbReference type="EC" id="2.1.1.33" evidence="1"/>
<dbReference type="EMBL" id="CH476597">
    <property type="protein sequence ID" value="EAU36387.1"/>
    <property type="molecule type" value="Genomic_DNA"/>
</dbReference>
<dbReference type="RefSeq" id="XP_001212291.1">
    <property type="nucleotide sequence ID" value="XM_001212291.1"/>
</dbReference>
<dbReference type="SMR" id="Q0CT71"/>
<dbReference type="STRING" id="341663.Q0CT71"/>
<dbReference type="EnsemblFungi" id="EAU36387">
    <property type="protein sequence ID" value="EAU36387"/>
    <property type="gene ID" value="ATEG_03113"/>
</dbReference>
<dbReference type="GeneID" id="4318068"/>
<dbReference type="VEuPathDB" id="FungiDB:ATEG_03113"/>
<dbReference type="eggNOG" id="KOG3115">
    <property type="taxonomic scope" value="Eukaryota"/>
</dbReference>
<dbReference type="HOGENOM" id="CLU_050910_3_1_1"/>
<dbReference type="OMA" id="LPNYFAK"/>
<dbReference type="OrthoDB" id="47276at2759"/>
<dbReference type="UniPathway" id="UPA00989"/>
<dbReference type="Proteomes" id="UP000007963">
    <property type="component" value="Unassembled WGS sequence"/>
</dbReference>
<dbReference type="GO" id="GO:0005634">
    <property type="term" value="C:nucleus"/>
    <property type="evidence" value="ECO:0007669"/>
    <property type="project" value="UniProtKB-SubCell"/>
</dbReference>
<dbReference type="GO" id="GO:0043527">
    <property type="term" value="C:tRNA methyltransferase complex"/>
    <property type="evidence" value="ECO:0007669"/>
    <property type="project" value="TreeGrafter"/>
</dbReference>
<dbReference type="GO" id="GO:0008176">
    <property type="term" value="F:tRNA (guanine(46)-N7)-methyltransferase activity"/>
    <property type="evidence" value="ECO:0007669"/>
    <property type="project" value="UniProtKB-UniRule"/>
</dbReference>
<dbReference type="GO" id="GO:0000049">
    <property type="term" value="F:tRNA binding"/>
    <property type="evidence" value="ECO:0007669"/>
    <property type="project" value="UniProtKB-UniRule"/>
</dbReference>
<dbReference type="Gene3D" id="3.40.50.150">
    <property type="entry name" value="Vaccinia Virus protein VP39"/>
    <property type="match status" value="1"/>
</dbReference>
<dbReference type="HAMAP" id="MF_03055">
    <property type="entry name" value="tRNA_methyltr_TrmB_euk"/>
    <property type="match status" value="1"/>
</dbReference>
<dbReference type="InterPro" id="IPR029063">
    <property type="entry name" value="SAM-dependent_MTases_sf"/>
</dbReference>
<dbReference type="InterPro" id="IPR025763">
    <property type="entry name" value="Trm8_euk"/>
</dbReference>
<dbReference type="InterPro" id="IPR003358">
    <property type="entry name" value="tRNA_(Gua-N-7)_MeTrfase_Trmb"/>
</dbReference>
<dbReference type="PANTHER" id="PTHR23417">
    <property type="entry name" value="3-DEOXY-D-MANNO-OCTULOSONIC-ACID TRANSFERASE/TRNA GUANINE-N 7 - -METHYLTRANSFERASE"/>
    <property type="match status" value="1"/>
</dbReference>
<dbReference type="PANTHER" id="PTHR23417:SF16">
    <property type="entry name" value="TRNA (GUANINE-N(7)-)-METHYLTRANSFERASE"/>
    <property type="match status" value="1"/>
</dbReference>
<dbReference type="Pfam" id="PF02390">
    <property type="entry name" value="Methyltransf_4"/>
    <property type="match status" value="2"/>
</dbReference>
<dbReference type="SUPFAM" id="SSF53335">
    <property type="entry name" value="S-adenosyl-L-methionine-dependent methyltransferases"/>
    <property type="match status" value="1"/>
</dbReference>
<dbReference type="PROSITE" id="PS51625">
    <property type="entry name" value="SAM_MT_TRMB"/>
    <property type="match status" value="1"/>
</dbReference>
<keyword id="KW-0489">Methyltransferase</keyword>
<keyword id="KW-0539">Nucleus</keyword>
<keyword id="KW-1185">Reference proteome</keyword>
<keyword id="KW-0694">RNA-binding</keyword>
<keyword id="KW-0949">S-adenosyl-L-methionine</keyword>
<keyword id="KW-0808">Transferase</keyword>
<keyword id="KW-0819">tRNA processing</keyword>
<keyword id="KW-0820">tRNA-binding</keyword>
<comment type="function">
    <text evidence="1">Catalyzes the formation of N(7)-methylguanine at position 46 (m7G46) in tRNA.</text>
</comment>
<comment type="catalytic activity">
    <reaction evidence="1">
        <text>guanosine(46) in tRNA + S-adenosyl-L-methionine = N(7)-methylguanosine(46) in tRNA + S-adenosyl-L-homocysteine</text>
        <dbReference type="Rhea" id="RHEA:42708"/>
        <dbReference type="Rhea" id="RHEA-COMP:10188"/>
        <dbReference type="Rhea" id="RHEA-COMP:10189"/>
        <dbReference type="ChEBI" id="CHEBI:57856"/>
        <dbReference type="ChEBI" id="CHEBI:59789"/>
        <dbReference type="ChEBI" id="CHEBI:74269"/>
        <dbReference type="ChEBI" id="CHEBI:74480"/>
        <dbReference type="EC" id="2.1.1.33"/>
    </reaction>
</comment>
<comment type="pathway">
    <text evidence="1">tRNA modification; N(7)-methylguanine-tRNA biosynthesis.</text>
</comment>
<comment type="subunit">
    <text evidence="1">Forms a complex with trm82.</text>
</comment>
<comment type="subcellular location">
    <subcellularLocation>
        <location evidence="1">Nucleus</location>
    </subcellularLocation>
</comment>
<comment type="similarity">
    <text evidence="1">Belongs to the class I-like SAM-binding methyltransferase superfamily. TrmB family.</text>
</comment>
<evidence type="ECO:0000255" key="1">
    <source>
        <dbReference type="HAMAP-Rule" id="MF_03055"/>
    </source>
</evidence>
<evidence type="ECO:0000256" key="2">
    <source>
        <dbReference type="SAM" id="MobiDB-lite"/>
    </source>
</evidence>
<accession>Q0CT71</accession>
<sequence>MGNSRNKRGKREANRQRTVEALARAQSGADTGAALQLPQKKFYRQRAHANPFSDHQLKYPLSPAHMDWASHYPAFENPDPAQTNLGGFRKLLKDVEVVDIGCGFGGLLIGLAPLLPETLIVGMEIRIQVLDYVNTRIQALRTQQRHFKLKSAGGGGSDAAPESPAAPPTPSEAASPDSTTPSEQQAPTTLVPGGFQNISAIRSNTMKFFPNFFGRGQLSKIFICFPDPHFKARKHKMRIISETLNAEYAYALRPGGLLYTITDVEEYHHWILRHFREPEVDGAVPCDDGADGIKELFERVSDEELQQDPCVEVMREATEEGKKVSRNKGNKYVAVFRRKADPEWPA</sequence>
<gene>
    <name type="primary">trm8</name>
    <name type="ORF">ATEG_03113</name>
</gene>
<protein>
    <recommendedName>
        <fullName evidence="1">tRNA (guanine-N(7)-)-methyltransferase</fullName>
        <ecNumber evidence="1">2.1.1.33</ecNumber>
    </recommendedName>
    <alternativeName>
        <fullName evidence="1">Transfer RNA methyltransferase 8</fullName>
    </alternativeName>
    <alternativeName>
        <fullName evidence="1">tRNA (guanine(46)-N(7))-methyltransferase</fullName>
    </alternativeName>
    <alternativeName>
        <fullName evidence="1">tRNA(m7G46)-methyltransferase</fullName>
    </alternativeName>
</protein>
<name>TRMB_ASPTN</name>
<reference key="1">
    <citation type="submission" date="2005-09" db="EMBL/GenBank/DDBJ databases">
        <title>Annotation of the Aspergillus terreus NIH2624 genome.</title>
        <authorList>
            <person name="Birren B.W."/>
            <person name="Lander E.S."/>
            <person name="Galagan J.E."/>
            <person name="Nusbaum C."/>
            <person name="Devon K."/>
            <person name="Henn M."/>
            <person name="Ma L.-J."/>
            <person name="Jaffe D.B."/>
            <person name="Butler J."/>
            <person name="Alvarez P."/>
            <person name="Gnerre S."/>
            <person name="Grabherr M."/>
            <person name="Kleber M."/>
            <person name="Mauceli E.W."/>
            <person name="Brockman W."/>
            <person name="Rounsley S."/>
            <person name="Young S.K."/>
            <person name="LaButti K."/>
            <person name="Pushparaj V."/>
            <person name="DeCaprio D."/>
            <person name="Crawford M."/>
            <person name="Koehrsen M."/>
            <person name="Engels R."/>
            <person name="Montgomery P."/>
            <person name="Pearson M."/>
            <person name="Howarth C."/>
            <person name="Larson L."/>
            <person name="Luoma S."/>
            <person name="White J."/>
            <person name="Alvarado L."/>
            <person name="Kodira C.D."/>
            <person name="Zeng Q."/>
            <person name="Oleary S."/>
            <person name="Yandava C."/>
            <person name="Denning D.W."/>
            <person name="Nierman W.C."/>
            <person name="Milne T."/>
            <person name="Madden K."/>
        </authorList>
    </citation>
    <scope>NUCLEOTIDE SEQUENCE [LARGE SCALE GENOMIC DNA]</scope>
    <source>
        <strain>NIH 2624 / FGSC A1156</strain>
    </source>
</reference>